<feature type="chain" id="PRO_0000131613" description="Small ribosomal subunit protein uS5">
    <location>
        <begin position="1"/>
        <end position="164"/>
    </location>
</feature>
<feature type="domain" description="S5 DRBM" evidence="1">
    <location>
        <begin position="10"/>
        <end position="73"/>
    </location>
</feature>
<dbReference type="EMBL" id="CP000023">
    <property type="protein sequence ID" value="AAV61515.1"/>
    <property type="molecule type" value="Genomic_DNA"/>
</dbReference>
<dbReference type="RefSeq" id="WP_002946171.1">
    <property type="nucleotide sequence ID" value="NC_006448.1"/>
</dbReference>
<dbReference type="SMR" id="Q5M2D0"/>
<dbReference type="STRING" id="264199.stu1917"/>
<dbReference type="GeneID" id="66899645"/>
<dbReference type="KEGG" id="stl:stu1917"/>
<dbReference type="eggNOG" id="COG0098">
    <property type="taxonomic scope" value="Bacteria"/>
</dbReference>
<dbReference type="HOGENOM" id="CLU_065898_2_2_9"/>
<dbReference type="Proteomes" id="UP000001170">
    <property type="component" value="Chromosome"/>
</dbReference>
<dbReference type="GO" id="GO:0015935">
    <property type="term" value="C:small ribosomal subunit"/>
    <property type="evidence" value="ECO:0007669"/>
    <property type="project" value="InterPro"/>
</dbReference>
<dbReference type="GO" id="GO:0019843">
    <property type="term" value="F:rRNA binding"/>
    <property type="evidence" value="ECO:0007669"/>
    <property type="project" value="UniProtKB-UniRule"/>
</dbReference>
<dbReference type="GO" id="GO:0003735">
    <property type="term" value="F:structural constituent of ribosome"/>
    <property type="evidence" value="ECO:0007669"/>
    <property type="project" value="InterPro"/>
</dbReference>
<dbReference type="GO" id="GO:0006412">
    <property type="term" value="P:translation"/>
    <property type="evidence" value="ECO:0007669"/>
    <property type="project" value="UniProtKB-UniRule"/>
</dbReference>
<dbReference type="FunFam" id="3.30.160.20:FF:000001">
    <property type="entry name" value="30S ribosomal protein S5"/>
    <property type="match status" value="1"/>
</dbReference>
<dbReference type="FunFam" id="3.30.230.10:FF:000002">
    <property type="entry name" value="30S ribosomal protein S5"/>
    <property type="match status" value="1"/>
</dbReference>
<dbReference type="Gene3D" id="3.30.160.20">
    <property type="match status" value="1"/>
</dbReference>
<dbReference type="Gene3D" id="3.30.230.10">
    <property type="match status" value="1"/>
</dbReference>
<dbReference type="HAMAP" id="MF_01307_B">
    <property type="entry name" value="Ribosomal_uS5_B"/>
    <property type="match status" value="1"/>
</dbReference>
<dbReference type="InterPro" id="IPR020568">
    <property type="entry name" value="Ribosomal_Su5_D2-typ_SF"/>
</dbReference>
<dbReference type="InterPro" id="IPR000851">
    <property type="entry name" value="Ribosomal_uS5"/>
</dbReference>
<dbReference type="InterPro" id="IPR005712">
    <property type="entry name" value="Ribosomal_uS5_bac-type"/>
</dbReference>
<dbReference type="InterPro" id="IPR005324">
    <property type="entry name" value="Ribosomal_uS5_C"/>
</dbReference>
<dbReference type="InterPro" id="IPR013810">
    <property type="entry name" value="Ribosomal_uS5_N"/>
</dbReference>
<dbReference type="InterPro" id="IPR018192">
    <property type="entry name" value="Ribosomal_uS5_N_CS"/>
</dbReference>
<dbReference type="InterPro" id="IPR014721">
    <property type="entry name" value="Ribsml_uS5_D2-typ_fold_subgr"/>
</dbReference>
<dbReference type="NCBIfam" id="TIGR01021">
    <property type="entry name" value="rpsE_bact"/>
    <property type="match status" value="1"/>
</dbReference>
<dbReference type="PANTHER" id="PTHR48277">
    <property type="entry name" value="MITOCHONDRIAL RIBOSOMAL PROTEIN S5"/>
    <property type="match status" value="1"/>
</dbReference>
<dbReference type="PANTHER" id="PTHR48277:SF1">
    <property type="entry name" value="MITOCHONDRIAL RIBOSOMAL PROTEIN S5"/>
    <property type="match status" value="1"/>
</dbReference>
<dbReference type="Pfam" id="PF00333">
    <property type="entry name" value="Ribosomal_S5"/>
    <property type="match status" value="1"/>
</dbReference>
<dbReference type="Pfam" id="PF03719">
    <property type="entry name" value="Ribosomal_S5_C"/>
    <property type="match status" value="1"/>
</dbReference>
<dbReference type="SUPFAM" id="SSF54768">
    <property type="entry name" value="dsRNA-binding domain-like"/>
    <property type="match status" value="1"/>
</dbReference>
<dbReference type="SUPFAM" id="SSF54211">
    <property type="entry name" value="Ribosomal protein S5 domain 2-like"/>
    <property type="match status" value="1"/>
</dbReference>
<dbReference type="PROSITE" id="PS00585">
    <property type="entry name" value="RIBOSOMAL_S5"/>
    <property type="match status" value="1"/>
</dbReference>
<dbReference type="PROSITE" id="PS50881">
    <property type="entry name" value="S5_DSRBD"/>
    <property type="match status" value="1"/>
</dbReference>
<keyword id="KW-1185">Reference proteome</keyword>
<keyword id="KW-0687">Ribonucleoprotein</keyword>
<keyword id="KW-0689">Ribosomal protein</keyword>
<keyword id="KW-0694">RNA-binding</keyword>
<keyword id="KW-0699">rRNA-binding</keyword>
<evidence type="ECO:0000255" key="1">
    <source>
        <dbReference type="HAMAP-Rule" id="MF_01307"/>
    </source>
</evidence>
<evidence type="ECO:0000305" key="2"/>
<accession>Q5M2D0</accession>
<reference key="1">
    <citation type="journal article" date="2004" name="Nat. Biotechnol.">
        <title>Complete sequence and comparative genome analysis of the dairy bacterium Streptococcus thermophilus.</title>
        <authorList>
            <person name="Bolotin A."/>
            <person name="Quinquis B."/>
            <person name="Renault P."/>
            <person name="Sorokin A."/>
            <person name="Ehrlich S.D."/>
            <person name="Kulakauskas S."/>
            <person name="Lapidus A."/>
            <person name="Goltsman E."/>
            <person name="Mazur M."/>
            <person name="Pusch G.D."/>
            <person name="Fonstein M."/>
            <person name="Overbeek R."/>
            <person name="Kyprides N."/>
            <person name="Purnelle B."/>
            <person name="Prozzi D."/>
            <person name="Ngui K."/>
            <person name="Masuy D."/>
            <person name="Hancy F."/>
            <person name="Burteau S."/>
            <person name="Boutry M."/>
            <person name="Delcour J."/>
            <person name="Goffeau A."/>
            <person name="Hols P."/>
        </authorList>
    </citation>
    <scope>NUCLEOTIDE SEQUENCE [LARGE SCALE GENOMIC DNA]</scope>
    <source>
        <strain>ATCC BAA-250 / LMG 18311</strain>
    </source>
</reference>
<organism>
    <name type="scientific">Streptococcus thermophilus (strain ATCC BAA-250 / LMG 18311)</name>
    <dbReference type="NCBI Taxonomy" id="264199"/>
    <lineage>
        <taxon>Bacteria</taxon>
        <taxon>Bacillati</taxon>
        <taxon>Bacillota</taxon>
        <taxon>Bacilli</taxon>
        <taxon>Lactobacillales</taxon>
        <taxon>Streptococcaceae</taxon>
        <taxon>Streptococcus</taxon>
    </lineage>
</organism>
<comment type="function">
    <text evidence="1">With S4 and S12 plays an important role in translational accuracy.</text>
</comment>
<comment type="function">
    <text evidence="1">Located at the back of the 30S subunit body where it stabilizes the conformation of the head with respect to the body.</text>
</comment>
<comment type="subunit">
    <text evidence="1">Part of the 30S ribosomal subunit. Contacts proteins S4 and S8.</text>
</comment>
<comment type="domain">
    <text>The N-terminal domain interacts with the head of the 30S subunit; the C-terminal domain interacts with the body and contacts protein S4. The interaction surface between S4 and S5 is involved in control of translational fidelity.</text>
</comment>
<comment type="similarity">
    <text evidence="1">Belongs to the universal ribosomal protein uS5 family.</text>
</comment>
<proteinExistence type="inferred from homology"/>
<sequence length="164" mass="17051">MAFKDNAVELEERVVAINRVTKVVKGGRNMRFAALVVVGDRNGRVGFGTGKSQEVPEAIRKAVEAAKKNLIEVPMVGTTIPHEVRSEFGGAKVLLKPAVEGAGVAAGGAVRAVVELAGVADVTSKSLGSNTPINIVRATVEGLKQLKRAEEVAALRGISVSDLA</sequence>
<name>RS5_STRT2</name>
<gene>
    <name evidence="1" type="primary">rpsE</name>
    <name type="ordered locus">stu1917</name>
</gene>
<protein>
    <recommendedName>
        <fullName evidence="1">Small ribosomal subunit protein uS5</fullName>
    </recommendedName>
    <alternativeName>
        <fullName evidence="2">30S ribosomal protein S5</fullName>
    </alternativeName>
</protein>